<keyword id="KW-1185">Reference proteome</keyword>
<keyword id="KW-0833">Ubl conjugation pathway</keyword>
<reference key="1">
    <citation type="journal article" date="2005" name="Nature">
        <title>Genome sequencing and analysis of Aspergillus oryzae.</title>
        <authorList>
            <person name="Machida M."/>
            <person name="Asai K."/>
            <person name="Sano M."/>
            <person name="Tanaka T."/>
            <person name="Kumagai T."/>
            <person name="Terai G."/>
            <person name="Kusumoto K."/>
            <person name="Arima T."/>
            <person name="Akita O."/>
            <person name="Kashiwagi Y."/>
            <person name="Abe K."/>
            <person name="Gomi K."/>
            <person name="Horiuchi H."/>
            <person name="Kitamoto K."/>
            <person name="Kobayashi T."/>
            <person name="Takeuchi M."/>
            <person name="Denning D.W."/>
            <person name="Galagan J.E."/>
            <person name="Nierman W.C."/>
            <person name="Yu J."/>
            <person name="Archer D.B."/>
            <person name="Bennett J.W."/>
            <person name="Bhatnagar D."/>
            <person name="Cleveland T.E."/>
            <person name="Fedorova N.D."/>
            <person name="Gotoh O."/>
            <person name="Horikawa H."/>
            <person name="Hosoyama A."/>
            <person name="Ichinomiya M."/>
            <person name="Igarashi R."/>
            <person name="Iwashita K."/>
            <person name="Juvvadi P.R."/>
            <person name="Kato M."/>
            <person name="Kato Y."/>
            <person name="Kin T."/>
            <person name="Kokubun A."/>
            <person name="Maeda H."/>
            <person name="Maeyama N."/>
            <person name="Maruyama J."/>
            <person name="Nagasaki H."/>
            <person name="Nakajima T."/>
            <person name="Oda K."/>
            <person name="Okada K."/>
            <person name="Paulsen I."/>
            <person name="Sakamoto K."/>
            <person name="Sawano T."/>
            <person name="Takahashi M."/>
            <person name="Takase K."/>
            <person name="Terabayashi Y."/>
            <person name="Wortman J.R."/>
            <person name="Yamada O."/>
            <person name="Yamagata Y."/>
            <person name="Anazawa H."/>
            <person name="Hata Y."/>
            <person name="Koide Y."/>
            <person name="Komori T."/>
            <person name="Koyama Y."/>
            <person name="Minetoki T."/>
            <person name="Suharnan S."/>
            <person name="Tanaka A."/>
            <person name="Isono K."/>
            <person name="Kuhara S."/>
            <person name="Ogasawara N."/>
            <person name="Kikuchi H."/>
        </authorList>
    </citation>
    <scope>NUCLEOTIDE SEQUENCE [LARGE SCALE GENOMIC DNA]</scope>
    <source>
        <strain>ATCC 42149 / RIB 40</strain>
    </source>
</reference>
<name>CRED_ASPOR</name>
<dbReference type="EMBL" id="BA000050">
    <property type="protein sequence ID" value="BAE57369.1"/>
    <property type="status" value="ALT_SEQ"/>
    <property type="molecule type" value="Genomic_DNA"/>
</dbReference>
<dbReference type="SMR" id="Q2UM46"/>
<dbReference type="STRING" id="510516.Q2UM46"/>
<dbReference type="OMA" id="GMATPFH"/>
<dbReference type="Proteomes" id="UP000006564">
    <property type="component" value="Chromosome 2"/>
</dbReference>
<dbReference type="GO" id="GO:0005829">
    <property type="term" value="C:cytosol"/>
    <property type="evidence" value="ECO:0007669"/>
    <property type="project" value="TreeGrafter"/>
</dbReference>
<dbReference type="GO" id="GO:0005886">
    <property type="term" value="C:plasma membrane"/>
    <property type="evidence" value="ECO:0007669"/>
    <property type="project" value="TreeGrafter"/>
</dbReference>
<dbReference type="GO" id="GO:0030674">
    <property type="term" value="F:protein-macromolecule adaptor activity"/>
    <property type="evidence" value="ECO:0007669"/>
    <property type="project" value="TreeGrafter"/>
</dbReference>
<dbReference type="GO" id="GO:0031625">
    <property type="term" value="F:ubiquitin protein ligase binding"/>
    <property type="evidence" value="ECO:0007669"/>
    <property type="project" value="TreeGrafter"/>
</dbReference>
<dbReference type="GO" id="GO:0031396">
    <property type="term" value="P:regulation of protein ubiquitination"/>
    <property type="evidence" value="ECO:0000250"/>
    <property type="project" value="UniProtKB"/>
</dbReference>
<dbReference type="GO" id="GO:0070086">
    <property type="term" value="P:ubiquitin-dependent endocytosis"/>
    <property type="evidence" value="ECO:0007669"/>
    <property type="project" value="TreeGrafter"/>
</dbReference>
<dbReference type="FunFam" id="2.60.40.640:FF:000018">
    <property type="entry name" value="HECT-type ubiquitin ligase-interacting protein creD"/>
    <property type="match status" value="1"/>
</dbReference>
<dbReference type="Gene3D" id="2.60.40.640">
    <property type="match status" value="1"/>
</dbReference>
<dbReference type="InterPro" id="IPR014752">
    <property type="entry name" value="Arrestin-like_C"/>
</dbReference>
<dbReference type="InterPro" id="IPR011021">
    <property type="entry name" value="Arrestin-like_N"/>
</dbReference>
<dbReference type="InterPro" id="IPR011022">
    <property type="entry name" value="Arrestin_C-like"/>
</dbReference>
<dbReference type="InterPro" id="IPR050357">
    <property type="entry name" value="Arrestin_domain-protein"/>
</dbReference>
<dbReference type="InterPro" id="IPR014756">
    <property type="entry name" value="Ig_E-set"/>
</dbReference>
<dbReference type="PANTHER" id="PTHR11188">
    <property type="entry name" value="ARRESTIN DOMAIN CONTAINING PROTEIN"/>
    <property type="match status" value="1"/>
</dbReference>
<dbReference type="PANTHER" id="PTHR11188:SF17">
    <property type="entry name" value="FI21816P1"/>
    <property type="match status" value="1"/>
</dbReference>
<dbReference type="Pfam" id="PF02752">
    <property type="entry name" value="Arrestin_C"/>
    <property type="match status" value="1"/>
</dbReference>
<dbReference type="Pfam" id="PF00339">
    <property type="entry name" value="Arrestin_N"/>
    <property type="match status" value="1"/>
</dbReference>
<dbReference type="SMART" id="SM01017">
    <property type="entry name" value="Arrestin_C"/>
    <property type="match status" value="1"/>
</dbReference>
<dbReference type="SUPFAM" id="SSF81296">
    <property type="entry name" value="E set domains"/>
    <property type="match status" value="1"/>
</dbReference>
<proteinExistence type="inferred from homology"/>
<sequence>MALSFFSGGGSASHAKYFDIRLDEDYIVFRGGEQEAASAHLSGKLLLCLSEPLSIKHIRLHLTGISRVCWHLPSSSAGGGRKSWRERVIYEKTWRFRDPGKGKTEILPAGNYEYPFNLVLEGNMPESIEGLSDTYITYRFKAEIGRKYAKDIIVRKPLRIIRTLEPSALELAHAMSVENIWPNKIEYSISTPTKAVIFGTSIRVDFKLIPLLKGLTIGQIVSQLIESHDLTLNPEDPDSIRNTYKNTRTILNDEFELDHDNALEIIDEAAEGYQFSRYLDLPKTLTRCLQDTDTKGIKVRHKLKFRVQLMNPDGHISELRATLPVSIFISPNLAIDENNNLVDQTPQSAQRAINDIAQQAPPLYGEHQFDQLYSELDPNGYRTPGPGSGPGTPFGTLSRNLSAENLASMNALTNTDISASALHSRLSNLSNLNITRPHQPSPTDHESQNDSEHRRLGVPADYFGPSSGSNSHSPSSPVLSRRPSDEVDHEHVPSGMATPFHPQYAEVETLSRVPSYSTAVRTTKTFPFRHLSSHLSKPISEMLGADLANSSLPWIFFIIGRALVTLTPLVTMMKTEDCDSFKLGLESRIRTEAASPA</sequence>
<gene>
    <name type="primary">creD</name>
    <name type="ORF">AO090003000144</name>
</gene>
<comment type="function">
    <text evidence="1">Component of the regulatory network controlling carbon source utilization through ubiquitination and deubiquitination involving creA, creB, creC, creD and acrB. May be involved in signaling by recognizing appropriately phosphorylated substrates via its arrestin domains and then recruit a HECT-type ubiquitin ligase such as hulA, leading to ubiquitination of the substrate, providing a link between ubiquitination and phosphorylation in protein regulation and stability (By similarity).</text>
</comment>
<comment type="subunit">
    <text evidence="1">Interacts with hulA.</text>
</comment>
<comment type="similarity">
    <text evidence="3">Belongs to the arrestin family.</text>
</comment>
<comment type="sequence caution" evidence="3">
    <conflict type="erroneous gene model prediction">
        <sequence resource="EMBL-CDS" id="BAE57369"/>
    </conflict>
</comment>
<protein>
    <recommendedName>
        <fullName>Probable HECT-type ubiquitin ligase-interacting protein creD</fullName>
    </recommendedName>
    <alternativeName>
        <fullName>Carbon catabolite repressor D</fullName>
    </alternativeName>
</protein>
<evidence type="ECO:0000250" key="1"/>
<evidence type="ECO:0000256" key="2">
    <source>
        <dbReference type="SAM" id="MobiDB-lite"/>
    </source>
</evidence>
<evidence type="ECO:0000305" key="3"/>
<organism>
    <name type="scientific">Aspergillus oryzae (strain ATCC 42149 / RIB 40)</name>
    <name type="common">Yellow koji mold</name>
    <dbReference type="NCBI Taxonomy" id="510516"/>
    <lineage>
        <taxon>Eukaryota</taxon>
        <taxon>Fungi</taxon>
        <taxon>Dikarya</taxon>
        <taxon>Ascomycota</taxon>
        <taxon>Pezizomycotina</taxon>
        <taxon>Eurotiomycetes</taxon>
        <taxon>Eurotiomycetidae</taxon>
        <taxon>Eurotiales</taxon>
        <taxon>Aspergillaceae</taxon>
        <taxon>Aspergillus</taxon>
        <taxon>Aspergillus subgen. Circumdati</taxon>
    </lineage>
</organism>
<feature type="chain" id="PRO_0000395699" description="Probable HECT-type ubiquitin ligase-interacting protein creD">
    <location>
        <begin position="1"/>
        <end position="597"/>
    </location>
</feature>
<feature type="region of interest" description="Disordered" evidence="2">
    <location>
        <begin position="375"/>
        <end position="398"/>
    </location>
</feature>
<feature type="region of interest" description="Disordered" evidence="2">
    <location>
        <begin position="432"/>
        <end position="499"/>
    </location>
</feature>
<feature type="compositionally biased region" description="Basic and acidic residues" evidence="2">
    <location>
        <begin position="443"/>
        <end position="455"/>
    </location>
</feature>
<feature type="compositionally biased region" description="Low complexity" evidence="2">
    <location>
        <begin position="465"/>
        <end position="481"/>
    </location>
</feature>
<feature type="compositionally biased region" description="Basic and acidic residues" evidence="2">
    <location>
        <begin position="482"/>
        <end position="492"/>
    </location>
</feature>
<accession>Q2UM46</accession>